<feature type="chain" id="PRO_0000454767" description="Histidinol-phosphatase">
    <location>
        <begin position="1"/>
        <end position="222"/>
    </location>
</feature>
<feature type="active site" description="Nucleophile" evidence="1">
    <location>
        <position position="8"/>
    </location>
</feature>
<feature type="active site" description="Proton donor" evidence="1">
    <location>
        <position position="10"/>
    </location>
</feature>
<feature type="binding site" evidence="1">
    <location>
        <position position="8"/>
    </location>
    <ligand>
        <name>Mg(2+)</name>
        <dbReference type="ChEBI" id="CHEBI:18420"/>
    </ligand>
</feature>
<feature type="binding site" evidence="1">
    <location>
        <position position="10"/>
    </location>
    <ligand>
        <name>Mg(2+)</name>
        <dbReference type="ChEBI" id="CHEBI:18420"/>
    </ligand>
</feature>
<feature type="binding site" evidence="1">
    <location>
        <position position="184"/>
    </location>
    <ligand>
        <name>Mg(2+)</name>
        <dbReference type="ChEBI" id="CHEBI:18420"/>
    </ligand>
</feature>
<dbReference type="EC" id="3.1.3.15" evidence="5"/>
<dbReference type="EMBL" id="FM999788">
    <property type="protein sequence ID" value="CAX50163.1"/>
    <property type="molecule type" value="Genomic_DNA"/>
</dbReference>
<dbReference type="RefSeq" id="WP_002225254.1">
    <property type="nucleotide sequence ID" value="NC_017501.1"/>
</dbReference>
<dbReference type="SMR" id="P0DV34"/>
<dbReference type="KEGG" id="nmt:NMV_1317"/>
<dbReference type="UniPathway" id="UPA00031">
    <property type="reaction ID" value="UER00013"/>
</dbReference>
<dbReference type="Proteomes" id="UP000002076">
    <property type="component" value="Chromosome"/>
</dbReference>
<dbReference type="GO" id="GO:0016787">
    <property type="term" value="F:hydrolase activity"/>
    <property type="evidence" value="ECO:0007669"/>
    <property type="project" value="UniProtKB-KW"/>
</dbReference>
<dbReference type="GO" id="GO:0046872">
    <property type="term" value="F:metal ion binding"/>
    <property type="evidence" value="ECO:0007669"/>
    <property type="project" value="UniProtKB-KW"/>
</dbReference>
<dbReference type="GO" id="GO:0000105">
    <property type="term" value="P:L-histidine biosynthetic process"/>
    <property type="evidence" value="ECO:0007669"/>
    <property type="project" value="UniProtKB-UniPathway"/>
</dbReference>
<dbReference type="CDD" id="cd02612">
    <property type="entry name" value="HAD_PGPPase"/>
    <property type="match status" value="1"/>
</dbReference>
<dbReference type="FunFam" id="3.40.50.1000:FF:000025">
    <property type="entry name" value="HAD hydrolase, family IB"/>
    <property type="match status" value="1"/>
</dbReference>
<dbReference type="FunFam" id="1.20.1440.100:FF:000006">
    <property type="entry name" value="HAD-IB family hydrolase"/>
    <property type="match status" value="1"/>
</dbReference>
<dbReference type="Gene3D" id="3.40.50.1000">
    <property type="entry name" value="HAD superfamily/HAD-like"/>
    <property type="match status" value="1"/>
</dbReference>
<dbReference type="Gene3D" id="1.20.1440.100">
    <property type="entry name" value="SG protein - dephosphorylation function"/>
    <property type="match status" value="1"/>
</dbReference>
<dbReference type="InterPro" id="IPR050582">
    <property type="entry name" value="HAD-like_SerB"/>
</dbReference>
<dbReference type="InterPro" id="IPR036412">
    <property type="entry name" value="HAD-like_sf"/>
</dbReference>
<dbReference type="InterPro" id="IPR006385">
    <property type="entry name" value="HAD_hydro_SerB1"/>
</dbReference>
<dbReference type="InterPro" id="IPR023214">
    <property type="entry name" value="HAD_sf"/>
</dbReference>
<dbReference type="NCBIfam" id="TIGR01488">
    <property type="entry name" value="HAD-SF-IB"/>
    <property type="match status" value="1"/>
</dbReference>
<dbReference type="NCBIfam" id="TIGR01490">
    <property type="entry name" value="HAD-SF-IB-hyp1"/>
    <property type="match status" value="1"/>
</dbReference>
<dbReference type="PANTHER" id="PTHR43344:SF13">
    <property type="entry name" value="PHOSPHATASE RV3661-RELATED"/>
    <property type="match status" value="1"/>
</dbReference>
<dbReference type="PANTHER" id="PTHR43344">
    <property type="entry name" value="PHOSPHOSERINE PHOSPHATASE"/>
    <property type="match status" value="1"/>
</dbReference>
<dbReference type="Pfam" id="PF12710">
    <property type="entry name" value="HAD"/>
    <property type="match status" value="1"/>
</dbReference>
<dbReference type="SUPFAM" id="SSF56784">
    <property type="entry name" value="HAD-like"/>
    <property type="match status" value="1"/>
</dbReference>
<organism>
    <name type="scientific">Neisseria meningitidis serogroup C (strain 8013)</name>
    <dbReference type="NCBI Taxonomy" id="604162"/>
    <lineage>
        <taxon>Bacteria</taxon>
        <taxon>Pseudomonadati</taxon>
        <taxon>Pseudomonadota</taxon>
        <taxon>Betaproteobacteria</taxon>
        <taxon>Neisseriales</taxon>
        <taxon>Neisseriaceae</taxon>
        <taxon>Neisseria</taxon>
    </lineage>
</organism>
<keyword id="KW-0028">Amino-acid biosynthesis</keyword>
<keyword id="KW-0368">Histidine biosynthesis</keyword>
<keyword id="KW-0378">Hydrolase</keyword>
<keyword id="KW-0460">Magnesium</keyword>
<keyword id="KW-0479">Metal-binding</keyword>
<protein>
    <recommendedName>
        <fullName evidence="3">Histidinol-phosphatase</fullName>
        <shortName evidence="4">Hol-Pase</shortName>
        <ecNumber evidence="5">3.1.3.15</ecNumber>
    </recommendedName>
    <alternativeName>
        <fullName evidence="4">Histidinol-phosphate phosphatase</fullName>
    </alternativeName>
</protein>
<comment type="function">
    <text evidence="5">Catalyzes the dephosphorylation of histidinol-phosphate to histidinol, the direct precursor of histidine.</text>
</comment>
<comment type="catalytic activity">
    <reaction evidence="5">
        <text>L-histidinol phosphate + H2O = L-histidinol + phosphate</text>
        <dbReference type="Rhea" id="RHEA:14465"/>
        <dbReference type="ChEBI" id="CHEBI:15377"/>
        <dbReference type="ChEBI" id="CHEBI:43474"/>
        <dbReference type="ChEBI" id="CHEBI:57699"/>
        <dbReference type="ChEBI" id="CHEBI:57980"/>
        <dbReference type="EC" id="3.1.3.15"/>
    </reaction>
    <physiologicalReaction direction="left-to-right" evidence="5">
        <dbReference type="Rhea" id="RHEA:14466"/>
    </physiologicalReaction>
</comment>
<comment type="cofactor">
    <cofactor evidence="1">
        <name>Mg(2+)</name>
        <dbReference type="ChEBI" id="CHEBI:18420"/>
    </cofactor>
    <text evidence="1">Binds 1 Mg(2+) ion per subunit.</text>
</comment>
<comment type="pathway">
    <text evidence="5">Amino-acid biosynthesis; L-histidine biosynthesis; L-histidine from 5-phospho-alpha-D-ribose 1-diphosphate: step 8/9.</text>
</comment>
<comment type="disruption phenotype">
    <text evidence="2">Deletion mutant is histidine auxotroph. Complementation of the mutant with hisB from E.coli restored growth on M9 without added histidine.</text>
</comment>
<comment type="similarity">
    <text evidence="4">Belongs to the HAD-like hydrolase superfamily. SerB family.</text>
</comment>
<accession>P0DV34</accession>
<gene>
    <name evidence="6" type="ordered locus">NMV_1317</name>
</gene>
<name>HIS9_NEIM8</name>
<reference key="1">
    <citation type="journal article" date="2009" name="Genome Biol.">
        <title>NeMeSys: a biological resource for narrowing the gap between sequence and function in the human pathogen Neisseria meningitidis.</title>
        <authorList>
            <person name="Rusniok C."/>
            <person name="Vallenet D."/>
            <person name="Floquet S."/>
            <person name="Ewles H."/>
            <person name="Mouze-Soulama C."/>
            <person name="Brown D."/>
            <person name="Lajus A."/>
            <person name="Buchrieser C."/>
            <person name="Medigue C."/>
            <person name="Glaser P."/>
            <person name="Pelicic V."/>
        </authorList>
    </citation>
    <scope>NUCLEOTIDE SEQUENCE [LARGE SCALE GENOMIC DNA]</scope>
    <source>
        <strain>8013</strain>
    </source>
</reference>
<reference key="2">
    <citation type="journal article" date="2020" name="Nat. Commun.">
        <title>Construction of a complete set of Neisseria meningitidis mutants and its use for the phenotypic profiling of this human pathogen.</title>
        <authorList>
            <person name="Muir A."/>
            <person name="Gurung I."/>
            <person name="Cehovin A."/>
            <person name="Bazin A."/>
            <person name="Vallenet D."/>
            <person name="Pelicic V."/>
        </authorList>
    </citation>
    <scope>FUNCTION</scope>
    <scope>CATALYTIC ACTIVITY</scope>
    <scope>PATHWAY</scope>
    <scope>DISRUPTION PHENOTYPE</scope>
    <source>
        <strain>8013</strain>
    </source>
</reference>
<sequence>MKNLAIFDLDNTLINTDSDHAWPQYLIKKGLVDAAETEAQNEKFYRDYQNGCLDIDAFLKFHLAPLARYSKEELAEFHREFMAEYIIPHISPMQRMLVQSHQMAGDETLVISSTNEFIITPVCHLFGITNIIGTQLETGSDGRYTGNYIGTPSLKEGKITRLNQWLAERGETLQSYGKTYFYSDSKNDLPLLRLVSEPVAVNPDAELEKEAKEKGWPVLNFK</sequence>
<proteinExistence type="evidence at protein level"/>
<evidence type="ECO:0000250" key="1">
    <source>
        <dbReference type="UniProtKB" id="Q58989"/>
    </source>
</evidence>
<evidence type="ECO:0000269" key="2">
    <source>
    </source>
</evidence>
<evidence type="ECO:0000303" key="3">
    <source>
    </source>
</evidence>
<evidence type="ECO:0000305" key="4"/>
<evidence type="ECO:0000305" key="5">
    <source>
    </source>
</evidence>
<evidence type="ECO:0000312" key="6">
    <source>
        <dbReference type="EMBL" id="CAX50163.1"/>
    </source>
</evidence>